<comment type="function">
    <text evidence="1">Modulates RecA activity.</text>
</comment>
<comment type="subcellular location">
    <subcellularLocation>
        <location evidence="1">Cytoplasm</location>
    </subcellularLocation>
</comment>
<comment type="similarity">
    <text evidence="1">Belongs to the RecX family.</text>
</comment>
<name>RECX_ECOHS</name>
<accession>A8A3H5</accession>
<proteinExistence type="inferred from homology"/>
<organism>
    <name type="scientific">Escherichia coli O9:H4 (strain HS)</name>
    <dbReference type="NCBI Taxonomy" id="331112"/>
    <lineage>
        <taxon>Bacteria</taxon>
        <taxon>Pseudomonadati</taxon>
        <taxon>Pseudomonadota</taxon>
        <taxon>Gammaproteobacteria</taxon>
        <taxon>Enterobacterales</taxon>
        <taxon>Enterobacteriaceae</taxon>
        <taxon>Escherichia</taxon>
    </lineage>
</organism>
<protein>
    <recommendedName>
        <fullName evidence="1">Regulatory protein RecX</fullName>
    </recommendedName>
</protein>
<evidence type="ECO:0000255" key="1">
    <source>
        <dbReference type="HAMAP-Rule" id="MF_01114"/>
    </source>
</evidence>
<dbReference type="EMBL" id="CP000802">
    <property type="protein sequence ID" value="ABV07079.1"/>
    <property type="molecule type" value="Genomic_DNA"/>
</dbReference>
<dbReference type="RefSeq" id="WP_000140508.1">
    <property type="nucleotide sequence ID" value="NC_009800.1"/>
</dbReference>
<dbReference type="SMR" id="A8A3H5"/>
<dbReference type="KEGG" id="ecx:EcHS_A2834"/>
<dbReference type="HOGENOM" id="CLU_066607_3_2_6"/>
<dbReference type="GO" id="GO:0005737">
    <property type="term" value="C:cytoplasm"/>
    <property type="evidence" value="ECO:0007669"/>
    <property type="project" value="UniProtKB-SubCell"/>
</dbReference>
<dbReference type="GO" id="GO:0006282">
    <property type="term" value="P:regulation of DNA repair"/>
    <property type="evidence" value="ECO:0007669"/>
    <property type="project" value="UniProtKB-UniRule"/>
</dbReference>
<dbReference type="FunFam" id="1.10.10.10:FF:000133">
    <property type="entry name" value="Regulatory protein RecX"/>
    <property type="match status" value="1"/>
</dbReference>
<dbReference type="FunFam" id="1.10.10.10:FF:000134">
    <property type="entry name" value="Regulatory protein RecX"/>
    <property type="match status" value="1"/>
</dbReference>
<dbReference type="FunFam" id="1.10.10.10:FF:000209">
    <property type="entry name" value="Regulatory protein RecX"/>
    <property type="match status" value="1"/>
</dbReference>
<dbReference type="Gene3D" id="1.10.10.10">
    <property type="entry name" value="Winged helix-like DNA-binding domain superfamily/Winged helix DNA-binding domain"/>
    <property type="match status" value="3"/>
</dbReference>
<dbReference type="HAMAP" id="MF_01114">
    <property type="entry name" value="RecX"/>
    <property type="match status" value="1"/>
</dbReference>
<dbReference type="InterPro" id="IPR053926">
    <property type="entry name" value="RecX_HTH_1st"/>
</dbReference>
<dbReference type="InterPro" id="IPR053924">
    <property type="entry name" value="RecX_HTH_2nd"/>
</dbReference>
<dbReference type="InterPro" id="IPR053925">
    <property type="entry name" value="RecX_HTH_3rd"/>
</dbReference>
<dbReference type="InterPro" id="IPR003783">
    <property type="entry name" value="Regulatory_RecX"/>
</dbReference>
<dbReference type="InterPro" id="IPR036388">
    <property type="entry name" value="WH-like_DNA-bd_sf"/>
</dbReference>
<dbReference type="NCBIfam" id="NF001052">
    <property type="entry name" value="PRK00117.1-1"/>
    <property type="match status" value="1"/>
</dbReference>
<dbReference type="PANTHER" id="PTHR33602">
    <property type="entry name" value="REGULATORY PROTEIN RECX FAMILY PROTEIN"/>
    <property type="match status" value="1"/>
</dbReference>
<dbReference type="PANTHER" id="PTHR33602:SF1">
    <property type="entry name" value="REGULATORY PROTEIN RECX FAMILY PROTEIN"/>
    <property type="match status" value="1"/>
</dbReference>
<dbReference type="Pfam" id="PF21982">
    <property type="entry name" value="RecX_HTH1"/>
    <property type="match status" value="1"/>
</dbReference>
<dbReference type="Pfam" id="PF02631">
    <property type="entry name" value="RecX_HTH2"/>
    <property type="match status" value="1"/>
</dbReference>
<dbReference type="Pfam" id="PF21981">
    <property type="entry name" value="RecX_HTH3"/>
    <property type="match status" value="1"/>
</dbReference>
<gene>
    <name evidence="1" type="primary">recX</name>
    <name type="ordered locus">EcHS_A2834</name>
</gene>
<keyword id="KW-0963">Cytoplasm</keyword>
<reference key="1">
    <citation type="journal article" date="2008" name="J. Bacteriol.">
        <title>The pangenome structure of Escherichia coli: comparative genomic analysis of E. coli commensal and pathogenic isolates.</title>
        <authorList>
            <person name="Rasko D.A."/>
            <person name="Rosovitz M.J."/>
            <person name="Myers G.S.A."/>
            <person name="Mongodin E.F."/>
            <person name="Fricke W.F."/>
            <person name="Gajer P."/>
            <person name="Crabtree J."/>
            <person name="Sebaihia M."/>
            <person name="Thomson N.R."/>
            <person name="Chaudhuri R."/>
            <person name="Henderson I.R."/>
            <person name="Sperandio V."/>
            <person name="Ravel J."/>
        </authorList>
    </citation>
    <scope>NUCLEOTIDE SEQUENCE [LARGE SCALE GENOMIC DNA]</scope>
    <source>
        <strain>HS</strain>
    </source>
</reference>
<sequence>MTESTSRRPAYARLLDRAVRILAVRDHSEQELRRKLAAPIMGKNGPEEIDATAEDYERVIAWCHEHGYLDDSRFVARFIASRSRKGYGPARIRQELNQKGISREATEKAMRECDIDWCALARDQATRKYGEPLPTVFSEKVKIQRFLLYRGYLMEDIQEIWRNFAD</sequence>
<feature type="chain" id="PRO_1000065166" description="Regulatory protein RecX">
    <location>
        <begin position="1"/>
        <end position="166"/>
    </location>
</feature>